<reference key="1">
    <citation type="journal article" date="2002" name="Nature">
        <title>Comparison of the genomes of two Xanthomonas pathogens with differing host specificities.</title>
        <authorList>
            <person name="da Silva A.C.R."/>
            <person name="Ferro J.A."/>
            <person name="Reinach F.C."/>
            <person name="Farah C.S."/>
            <person name="Furlan L.R."/>
            <person name="Quaggio R.B."/>
            <person name="Monteiro-Vitorello C.B."/>
            <person name="Van Sluys M.A."/>
            <person name="Almeida N.F. Jr."/>
            <person name="Alves L.M.C."/>
            <person name="do Amaral A.M."/>
            <person name="Bertolini M.C."/>
            <person name="Camargo L.E.A."/>
            <person name="Camarotte G."/>
            <person name="Cannavan F."/>
            <person name="Cardozo J."/>
            <person name="Chambergo F."/>
            <person name="Ciapina L.P."/>
            <person name="Cicarelli R.M.B."/>
            <person name="Coutinho L.L."/>
            <person name="Cursino-Santos J.R."/>
            <person name="El-Dorry H."/>
            <person name="Faria J.B."/>
            <person name="Ferreira A.J.S."/>
            <person name="Ferreira R.C.C."/>
            <person name="Ferro M.I.T."/>
            <person name="Formighieri E.F."/>
            <person name="Franco M.C."/>
            <person name="Greggio C.C."/>
            <person name="Gruber A."/>
            <person name="Katsuyama A.M."/>
            <person name="Kishi L.T."/>
            <person name="Leite R.P."/>
            <person name="Lemos E.G.M."/>
            <person name="Lemos M.V.F."/>
            <person name="Locali E.C."/>
            <person name="Machado M.A."/>
            <person name="Madeira A.M.B.N."/>
            <person name="Martinez-Rossi N.M."/>
            <person name="Martins E.C."/>
            <person name="Meidanis J."/>
            <person name="Menck C.F.M."/>
            <person name="Miyaki C.Y."/>
            <person name="Moon D.H."/>
            <person name="Moreira L.M."/>
            <person name="Novo M.T.M."/>
            <person name="Okura V.K."/>
            <person name="Oliveira M.C."/>
            <person name="Oliveira V.R."/>
            <person name="Pereira H.A."/>
            <person name="Rossi A."/>
            <person name="Sena J.A.D."/>
            <person name="Silva C."/>
            <person name="de Souza R.F."/>
            <person name="Spinola L.A.F."/>
            <person name="Takita M.A."/>
            <person name="Tamura R.E."/>
            <person name="Teixeira E.C."/>
            <person name="Tezza R.I.D."/>
            <person name="Trindade dos Santos M."/>
            <person name="Truffi D."/>
            <person name="Tsai S.M."/>
            <person name="White F.F."/>
            <person name="Setubal J.C."/>
            <person name="Kitajima J.P."/>
        </authorList>
    </citation>
    <scope>NUCLEOTIDE SEQUENCE [LARGE SCALE GENOMIC DNA]</scope>
    <source>
        <strain>306</strain>
    </source>
</reference>
<organism>
    <name type="scientific">Xanthomonas axonopodis pv. citri (strain 306)</name>
    <dbReference type="NCBI Taxonomy" id="190486"/>
    <lineage>
        <taxon>Bacteria</taxon>
        <taxon>Pseudomonadati</taxon>
        <taxon>Pseudomonadota</taxon>
        <taxon>Gammaproteobacteria</taxon>
        <taxon>Lysobacterales</taxon>
        <taxon>Lysobacteraceae</taxon>
        <taxon>Xanthomonas</taxon>
    </lineage>
</organism>
<dbReference type="EC" id="1.3.3.3" evidence="1"/>
<dbReference type="EMBL" id="AE008923">
    <property type="protein sequence ID" value="AAM38944.1"/>
    <property type="molecule type" value="Genomic_DNA"/>
</dbReference>
<dbReference type="RefSeq" id="WP_003487378.1">
    <property type="nucleotide sequence ID" value="NC_003919.1"/>
</dbReference>
<dbReference type="SMR" id="Q8PF76"/>
<dbReference type="GeneID" id="66913095"/>
<dbReference type="KEGG" id="xac:XAC4109"/>
<dbReference type="eggNOG" id="COG0408">
    <property type="taxonomic scope" value="Bacteria"/>
</dbReference>
<dbReference type="HOGENOM" id="CLU_026169_0_1_6"/>
<dbReference type="UniPathway" id="UPA00251">
    <property type="reaction ID" value="UER00322"/>
</dbReference>
<dbReference type="Proteomes" id="UP000000576">
    <property type="component" value="Chromosome"/>
</dbReference>
<dbReference type="GO" id="GO:0005737">
    <property type="term" value="C:cytoplasm"/>
    <property type="evidence" value="ECO:0007669"/>
    <property type="project" value="UniProtKB-SubCell"/>
</dbReference>
<dbReference type="GO" id="GO:0004109">
    <property type="term" value="F:coproporphyrinogen oxidase activity"/>
    <property type="evidence" value="ECO:0007669"/>
    <property type="project" value="UniProtKB-UniRule"/>
</dbReference>
<dbReference type="GO" id="GO:0046872">
    <property type="term" value="F:metal ion binding"/>
    <property type="evidence" value="ECO:0007669"/>
    <property type="project" value="UniProtKB-KW"/>
</dbReference>
<dbReference type="GO" id="GO:0042803">
    <property type="term" value="F:protein homodimerization activity"/>
    <property type="evidence" value="ECO:0000250"/>
    <property type="project" value="UniProtKB"/>
</dbReference>
<dbReference type="GO" id="GO:0006782">
    <property type="term" value="P:protoporphyrinogen IX biosynthetic process"/>
    <property type="evidence" value="ECO:0007669"/>
    <property type="project" value="UniProtKB-UniRule"/>
</dbReference>
<dbReference type="FunFam" id="3.40.1500.10:FF:000001">
    <property type="entry name" value="Oxygen-dependent coproporphyrinogen-III oxidase"/>
    <property type="match status" value="1"/>
</dbReference>
<dbReference type="Gene3D" id="3.40.1500.10">
    <property type="entry name" value="Coproporphyrinogen III oxidase, aerobic"/>
    <property type="match status" value="1"/>
</dbReference>
<dbReference type="HAMAP" id="MF_00333">
    <property type="entry name" value="Coprogen_oxidas"/>
    <property type="match status" value="1"/>
</dbReference>
<dbReference type="InterPro" id="IPR001260">
    <property type="entry name" value="Coprogen_oxidase_aer"/>
</dbReference>
<dbReference type="InterPro" id="IPR036406">
    <property type="entry name" value="Coprogen_oxidase_aer_sf"/>
</dbReference>
<dbReference type="InterPro" id="IPR018375">
    <property type="entry name" value="Coprogen_oxidase_CS"/>
</dbReference>
<dbReference type="NCBIfam" id="NF003727">
    <property type="entry name" value="PRK05330.1"/>
    <property type="match status" value="1"/>
</dbReference>
<dbReference type="PANTHER" id="PTHR10755">
    <property type="entry name" value="COPROPORPHYRINOGEN III OXIDASE, MITOCHONDRIAL"/>
    <property type="match status" value="1"/>
</dbReference>
<dbReference type="PANTHER" id="PTHR10755:SF0">
    <property type="entry name" value="OXYGEN-DEPENDENT COPROPORPHYRINOGEN-III OXIDASE, MITOCHONDRIAL"/>
    <property type="match status" value="1"/>
</dbReference>
<dbReference type="Pfam" id="PF01218">
    <property type="entry name" value="Coprogen_oxidas"/>
    <property type="match status" value="1"/>
</dbReference>
<dbReference type="PIRSF" id="PIRSF000166">
    <property type="entry name" value="Coproporphyri_ox"/>
    <property type="match status" value="1"/>
</dbReference>
<dbReference type="PRINTS" id="PR00073">
    <property type="entry name" value="COPRGNOXDASE"/>
</dbReference>
<dbReference type="SUPFAM" id="SSF102886">
    <property type="entry name" value="Coproporphyrinogen III oxidase"/>
    <property type="match status" value="1"/>
</dbReference>
<dbReference type="PROSITE" id="PS01021">
    <property type="entry name" value="COPROGEN_OXIDASE"/>
    <property type="match status" value="1"/>
</dbReference>
<evidence type="ECO:0000255" key="1">
    <source>
        <dbReference type="HAMAP-Rule" id="MF_00333"/>
    </source>
</evidence>
<keyword id="KW-0963">Cytoplasm</keyword>
<keyword id="KW-0350">Heme biosynthesis</keyword>
<keyword id="KW-0479">Metal-binding</keyword>
<keyword id="KW-0560">Oxidoreductase</keyword>
<keyword id="KW-0627">Porphyrin biosynthesis</keyword>
<sequence>MNEFDRVRDYLTDLQDRICAAVEAADGKARFAEDLWKREEGGGGRTRILRDGAVFEQAGIGFSDVSGTRLPPSASAHRPELAGATWRACGVSLVFHPHNPYIPTTHMNVRYFRAERDGEVVAAWFGGGFDLTPFYPFDEDVQHWHRVAQALCVPFGQERYAAHKRWCDEYFFLRHRNETRGVGGLFFDDLGQDFERDFAYQRAVGDGFLDAYIPIVQRRKDTPYGEREREFQLYRRGRYVEFNLVYDRGTLFGLQSGGRAESILMSLPPRVRWEYGFTPEPGSAEARLADYLIPRDWLG</sequence>
<proteinExistence type="inferred from homology"/>
<accession>Q8PF76</accession>
<feature type="chain" id="PRO_0000109931" description="Oxygen-dependent coproporphyrinogen-III oxidase">
    <location>
        <begin position="1"/>
        <end position="299"/>
    </location>
</feature>
<feature type="region of interest" description="Important for dimerization" evidence="1">
    <location>
        <begin position="239"/>
        <end position="274"/>
    </location>
</feature>
<feature type="active site" description="Proton donor" evidence="1">
    <location>
        <position position="106"/>
    </location>
</feature>
<feature type="binding site" evidence="1">
    <location>
        <position position="92"/>
    </location>
    <ligand>
        <name>substrate</name>
    </ligand>
</feature>
<feature type="binding site" evidence="1">
    <location>
        <position position="96"/>
    </location>
    <ligand>
        <name>a divalent metal cation</name>
        <dbReference type="ChEBI" id="CHEBI:60240"/>
    </ligand>
</feature>
<feature type="binding site" evidence="1">
    <location>
        <position position="106"/>
    </location>
    <ligand>
        <name>a divalent metal cation</name>
        <dbReference type="ChEBI" id="CHEBI:60240"/>
    </ligand>
</feature>
<feature type="binding site" evidence="1">
    <location>
        <begin position="108"/>
        <end position="110"/>
    </location>
    <ligand>
        <name>substrate</name>
    </ligand>
</feature>
<feature type="binding site" evidence="1">
    <location>
        <position position="145"/>
    </location>
    <ligand>
        <name>a divalent metal cation</name>
        <dbReference type="ChEBI" id="CHEBI:60240"/>
    </ligand>
</feature>
<feature type="binding site" evidence="1">
    <location>
        <position position="175"/>
    </location>
    <ligand>
        <name>a divalent metal cation</name>
        <dbReference type="ChEBI" id="CHEBI:60240"/>
    </ligand>
</feature>
<feature type="binding site" evidence="1">
    <location>
        <begin position="257"/>
        <end position="259"/>
    </location>
    <ligand>
        <name>substrate</name>
    </ligand>
</feature>
<feature type="site" description="Important for dimerization" evidence="1">
    <location>
        <position position="175"/>
    </location>
</feature>
<gene>
    <name evidence="1" type="primary">hemF</name>
    <name type="ordered locus">XAC4109</name>
</gene>
<protein>
    <recommendedName>
        <fullName evidence="1">Oxygen-dependent coproporphyrinogen-III oxidase</fullName>
        <shortName evidence="1">CPO</shortName>
        <shortName evidence="1">Coprogen oxidase</shortName>
        <shortName evidence="1">Coproporphyrinogenase</shortName>
        <ecNumber evidence="1">1.3.3.3</ecNumber>
    </recommendedName>
</protein>
<comment type="function">
    <text evidence="1">Involved in the heme biosynthesis. Catalyzes the aerobic oxidative decarboxylation of propionate groups of rings A and B of coproporphyrinogen-III to yield the vinyl groups in protoporphyrinogen-IX.</text>
</comment>
<comment type="catalytic activity">
    <reaction evidence="1">
        <text>coproporphyrinogen III + O2 + 2 H(+) = protoporphyrinogen IX + 2 CO2 + 2 H2O</text>
        <dbReference type="Rhea" id="RHEA:18257"/>
        <dbReference type="ChEBI" id="CHEBI:15377"/>
        <dbReference type="ChEBI" id="CHEBI:15378"/>
        <dbReference type="ChEBI" id="CHEBI:15379"/>
        <dbReference type="ChEBI" id="CHEBI:16526"/>
        <dbReference type="ChEBI" id="CHEBI:57307"/>
        <dbReference type="ChEBI" id="CHEBI:57309"/>
        <dbReference type="EC" id="1.3.3.3"/>
    </reaction>
</comment>
<comment type="cofactor">
    <cofactor evidence="1">
        <name>a divalent metal cation</name>
        <dbReference type="ChEBI" id="CHEBI:60240"/>
    </cofactor>
</comment>
<comment type="pathway">
    <text evidence="1">Porphyrin-containing compound metabolism; protoporphyrin-IX biosynthesis; protoporphyrinogen-IX from coproporphyrinogen-III (O2 route): step 1/1.</text>
</comment>
<comment type="subunit">
    <text evidence="1">Homodimer.</text>
</comment>
<comment type="subcellular location">
    <subcellularLocation>
        <location evidence="1">Cytoplasm</location>
    </subcellularLocation>
</comment>
<comment type="similarity">
    <text evidence="1">Belongs to the aerobic coproporphyrinogen-III oxidase family.</text>
</comment>
<name>HEM6_XANAC</name>